<keyword id="KW-1015">Disulfide bond</keyword>
<keyword id="KW-0379">Hydroxylation</keyword>
<keyword id="KW-0872">Ion channel impairing toxin</keyword>
<keyword id="KW-0528">Neurotoxin</keyword>
<keyword id="KW-0964">Secreted</keyword>
<keyword id="KW-0732">Signal</keyword>
<keyword id="KW-0800">Toxin</keyword>
<name>CU51B_CONCL</name>
<dbReference type="EMBL" id="GU290200">
    <property type="protein sequence ID" value="ADB43127.1"/>
    <property type="molecule type" value="mRNA"/>
</dbReference>
<dbReference type="ConoServer" id="3982">
    <property type="toxin name" value="Cal5.1 L3 precursor"/>
</dbReference>
<dbReference type="GO" id="GO:0005576">
    <property type="term" value="C:extracellular region"/>
    <property type="evidence" value="ECO:0007669"/>
    <property type="project" value="UniProtKB-SubCell"/>
</dbReference>
<dbReference type="GO" id="GO:0099106">
    <property type="term" value="F:ion channel regulator activity"/>
    <property type="evidence" value="ECO:0007669"/>
    <property type="project" value="UniProtKB-KW"/>
</dbReference>
<dbReference type="GO" id="GO:0090729">
    <property type="term" value="F:toxin activity"/>
    <property type="evidence" value="ECO:0007669"/>
    <property type="project" value="UniProtKB-KW"/>
</dbReference>
<organism>
    <name type="scientific">Californiconus californicus</name>
    <name type="common">California cone</name>
    <name type="synonym">Conus californicus</name>
    <dbReference type="NCBI Taxonomy" id="1736779"/>
    <lineage>
        <taxon>Eukaryota</taxon>
        <taxon>Metazoa</taxon>
        <taxon>Spiralia</taxon>
        <taxon>Lophotrochozoa</taxon>
        <taxon>Mollusca</taxon>
        <taxon>Gastropoda</taxon>
        <taxon>Caenogastropoda</taxon>
        <taxon>Neogastropoda</taxon>
        <taxon>Conoidea</taxon>
        <taxon>Conidae</taxon>
        <taxon>Californiconus</taxon>
    </lineage>
</organism>
<proteinExistence type="inferred from homology"/>
<feature type="signal peptide" evidence="2">
    <location>
        <begin position="1"/>
        <end position="22"/>
    </location>
</feature>
<feature type="propeptide" id="PRO_5000566285" evidence="5">
    <location>
        <begin position="23"/>
        <end position="42"/>
    </location>
</feature>
<feature type="peptide" id="PRO_0000414962" description="Conotoxin Cal5a L2" evidence="5">
    <location>
        <begin position="44"/>
        <end position="74"/>
    </location>
</feature>
<feature type="peptide" id="PRO_0000414963" description="Conotoxin Cal5b L2" evidence="5">
    <location>
        <begin position="54"/>
        <end position="74"/>
    </location>
</feature>
<feature type="peptide" id="PRO_5000566286" description="Conotoxin Cal5.1" evidence="5">
    <location>
        <begin position="61"/>
        <end position="74"/>
    </location>
</feature>
<feature type="modified residue" description="4-hydroxyproline" evidence="1">
    <location>
        <position position="50"/>
    </location>
</feature>
<feature type="modified residue" description="4-hydroxyproline; partial" evidence="1">
    <location>
        <position position="58"/>
    </location>
</feature>
<feature type="modified residue" description="4-hydroxyproline; partial" evidence="1">
    <location>
        <position position="62"/>
    </location>
</feature>
<feature type="modified residue" description="4-hydroxyproline; partial" evidence="1">
    <location>
        <position position="64"/>
    </location>
</feature>
<protein>
    <recommendedName>
        <fullName evidence="3">Conotoxin Cal5a L2</fullName>
    </recommendedName>
    <component>
        <recommendedName>
            <fullName evidence="3">Conotoxin Cal5b L2</fullName>
        </recommendedName>
    </component>
    <component>
        <recommendedName>
            <fullName evidence="3">Conotoxin Cal5.1</fullName>
        </recommendedName>
    </component>
</protein>
<evidence type="ECO:0000250" key="1"/>
<evidence type="ECO:0000255" key="2"/>
<evidence type="ECO:0000303" key="3">
    <source>
    </source>
</evidence>
<evidence type="ECO:0000305" key="4"/>
<evidence type="ECO:0000305" key="5">
    <source>
    </source>
</evidence>
<reference key="1">
    <citation type="journal article" date="2011" name="Toxicon">
        <title>Diversity of conotoxin types from Conus californicus reflects a diversity of prey types and a novel evolutionary history.</title>
        <authorList>
            <person name="Elliger C.A."/>
            <person name="Richmond T.A."/>
            <person name="Lebaric Z.N."/>
            <person name="Pierce N.T."/>
            <person name="Sweedler J.V."/>
            <person name="Gilly W.F."/>
        </authorList>
    </citation>
    <scope>NUCLEOTIDE SEQUENCE [MRNA]</scope>
    <source>
        <tissue>Venom duct</tissue>
    </source>
</reference>
<sequence>MRFYIGLMAALMLTSILRTDSASVGQTGTKSELALIERVIRQRDAADVKPVARHNDGPGRDPAPCCQHPIETCCRR</sequence>
<accession>D2Y170</accession>
<comment type="function">
    <text evidence="4">Probable neurotoxin with unknown target. Possibly targets ion channels.</text>
</comment>
<comment type="subcellular location">
    <subcellularLocation>
        <location evidence="5">Secreted</location>
    </subcellularLocation>
</comment>
<comment type="tissue specificity">
    <text evidence="5">Expressed by the venom duct.</text>
</comment>
<comment type="domain">
    <text evidence="5">The cysteine framework is V (CC-CC).</text>
</comment>
<comment type="PTM">
    <text evidence="4">Contains 2 disulfide bonds that can be either 'C1-C3, C2-C4' or 'C1-C4, C2-C3', since these disulfide connectivities have been observed for conotoxins with cysteine framework V (for examples, see AC P0DQQ7 and AC P81755).</text>
</comment>
<comment type="similarity">
    <text evidence="4">Belongs to the conotoxin T superfamily.</text>
</comment>